<reference key="1">
    <citation type="journal article" date="2005" name="Proc. Natl. Acad. Sci. U.S.A.">
        <title>The psychrophilic lifestyle as revealed by the genome sequence of Colwellia psychrerythraea 34H through genomic and proteomic analyses.</title>
        <authorList>
            <person name="Methe B.A."/>
            <person name="Nelson K.E."/>
            <person name="Deming J.W."/>
            <person name="Momen B."/>
            <person name="Melamud E."/>
            <person name="Zhang X."/>
            <person name="Moult J."/>
            <person name="Madupu R."/>
            <person name="Nelson W.C."/>
            <person name="Dodson R.J."/>
            <person name="Brinkac L.M."/>
            <person name="Daugherty S.C."/>
            <person name="Durkin A.S."/>
            <person name="DeBoy R.T."/>
            <person name="Kolonay J.F."/>
            <person name="Sullivan S.A."/>
            <person name="Zhou L."/>
            <person name="Davidsen T.M."/>
            <person name="Wu M."/>
            <person name="Huston A.L."/>
            <person name="Lewis M."/>
            <person name="Weaver B."/>
            <person name="Weidman J.F."/>
            <person name="Khouri H."/>
            <person name="Utterback T.R."/>
            <person name="Feldblyum T.V."/>
            <person name="Fraser C.M."/>
        </authorList>
    </citation>
    <scope>NUCLEOTIDE SEQUENCE [LARGE SCALE GENOMIC DNA]</scope>
    <source>
        <strain>34H / ATCC BAA-681</strain>
    </source>
</reference>
<dbReference type="EMBL" id="CP000083">
    <property type="protein sequence ID" value="AAZ25882.1"/>
    <property type="molecule type" value="Genomic_DNA"/>
</dbReference>
<dbReference type="RefSeq" id="WP_011041724.1">
    <property type="nucleotide sequence ID" value="NC_003910.7"/>
</dbReference>
<dbReference type="SMR" id="Q487Z1"/>
<dbReference type="STRING" id="167879.CPS_0875"/>
<dbReference type="KEGG" id="cps:CPS_0875"/>
<dbReference type="eggNOG" id="COG0480">
    <property type="taxonomic scope" value="Bacteria"/>
</dbReference>
<dbReference type="HOGENOM" id="CLU_002794_4_1_6"/>
<dbReference type="Proteomes" id="UP000000547">
    <property type="component" value="Chromosome"/>
</dbReference>
<dbReference type="GO" id="GO:0005737">
    <property type="term" value="C:cytoplasm"/>
    <property type="evidence" value="ECO:0007669"/>
    <property type="project" value="UniProtKB-SubCell"/>
</dbReference>
<dbReference type="GO" id="GO:0005525">
    <property type="term" value="F:GTP binding"/>
    <property type="evidence" value="ECO:0007669"/>
    <property type="project" value="UniProtKB-UniRule"/>
</dbReference>
<dbReference type="GO" id="GO:0003924">
    <property type="term" value="F:GTPase activity"/>
    <property type="evidence" value="ECO:0007669"/>
    <property type="project" value="InterPro"/>
</dbReference>
<dbReference type="GO" id="GO:0097216">
    <property type="term" value="F:guanosine tetraphosphate binding"/>
    <property type="evidence" value="ECO:0007669"/>
    <property type="project" value="UniProtKB-ARBA"/>
</dbReference>
<dbReference type="GO" id="GO:0003746">
    <property type="term" value="F:translation elongation factor activity"/>
    <property type="evidence" value="ECO:0007669"/>
    <property type="project" value="UniProtKB-UniRule"/>
</dbReference>
<dbReference type="GO" id="GO:0032790">
    <property type="term" value="P:ribosome disassembly"/>
    <property type="evidence" value="ECO:0007669"/>
    <property type="project" value="TreeGrafter"/>
</dbReference>
<dbReference type="CDD" id="cd01886">
    <property type="entry name" value="EF-G"/>
    <property type="match status" value="1"/>
</dbReference>
<dbReference type="CDD" id="cd16262">
    <property type="entry name" value="EFG_III"/>
    <property type="match status" value="1"/>
</dbReference>
<dbReference type="CDD" id="cd01434">
    <property type="entry name" value="EFG_mtEFG1_IV"/>
    <property type="match status" value="1"/>
</dbReference>
<dbReference type="CDD" id="cd03713">
    <property type="entry name" value="EFG_mtEFG_C"/>
    <property type="match status" value="1"/>
</dbReference>
<dbReference type="CDD" id="cd04088">
    <property type="entry name" value="EFG_mtEFG_II"/>
    <property type="match status" value="1"/>
</dbReference>
<dbReference type="FunFam" id="2.40.30.10:FF:000006">
    <property type="entry name" value="Elongation factor G"/>
    <property type="match status" value="1"/>
</dbReference>
<dbReference type="FunFam" id="3.30.230.10:FF:000003">
    <property type="entry name" value="Elongation factor G"/>
    <property type="match status" value="1"/>
</dbReference>
<dbReference type="FunFam" id="3.30.70.240:FF:000001">
    <property type="entry name" value="Elongation factor G"/>
    <property type="match status" value="1"/>
</dbReference>
<dbReference type="FunFam" id="3.30.70.870:FF:000001">
    <property type="entry name" value="Elongation factor G"/>
    <property type="match status" value="1"/>
</dbReference>
<dbReference type="FunFam" id="3.40.50.300:FF:000029">
    <property type="entry name" value="Elongation factor G"/>
    <property type="match status" value="1"/>
</dbReference>
<dbReference type="Gene3D" id="3.30.230.10">
    <property type="match status" value="1"/>
</dbReference>
<dbReference type="Gene3D" id="3.30.70.240">
    <property type="match status" value="1"/>
</dbReference>
<dbReference type="Gene3D" id="3.30.70.870">
    <property type="entry name" value="Elongation Factor G (Translational Gtpase), domain 3"/>
    <property type="match status" value="1"/>
</dbReference>
<dbReference type="Gene3D" id="3.40.50.300">
    <property type="entry name" value="P-loop containing nucleotide triphosphate hydrolases"/>
    <property type="match status" value="1"/>
</dbReference>
<dbReference type="Gene3D" id="2.40.30.10">
    <property type="entry name" value="Translation factors"/>
    <property type="match status" value="1"/>
</dbReference>
<dbReference type="HAMAP" id="MF_00054_B">
    <property type="entry name" value="EF_G_EF_2_B"/>
    <property type="match status" value="1"/>
</dbReference>
<dbReference type="InterPro" id="IPR041095">
    <property type="entry name" value="EFG_II"/>
</dbReference>
<dbReference type="InterPro" id="IPR009022">
    <property type="entry name" value="EFG_III"/>
</dbReference>
<dbReference type="InterPro" id="IPR035647">
    <property type="entry name" value="EFG_III/V"/>
</dbReference>
<dbReference type="InterPro" id="IPR047872">
    <property type="entry name" value="EFG_IV"/>
</dbReference>
<dbReference type="InterPro" id="IPR035649">
    <property type="entry name" value="EFG_V"/>
</dbReference>
<dbReference type="InterPro" id="IPR000640">
    <property type="entry name" value="EFG_V-like"/>
</dbReference>
<dbReference type="InterPro" id="IPR004161">
    <property type="entry name" value="EFTu-like_2"/>
</dbReference>
<dbReference type="InterPro" id="IPR031157">
    <property type="entry name" value="G_TR_CS"/>
</dbReference>
<dbReference type="InterPro" id="IPR027417">
    <property type="entry name" value="P-loop_NTPase"/>
</dbReference>
<dbReference type="InterPro" id="IPR020568">
    <property type="entry name" value="Ribosomal_Su5_D2-typ_SF"/>
</dbReference>
<dbReference type="InterPro" id="IPR014721">
    <property type="entry name" value="Ribsml_uS5_D2-typ_fold_subgr"/>
</dbReference>
<dbReference type="InterPro" id="IPR005225">
    <property type="entry name" value="Small_GTP-bd"/>
</dbReference>
<dbReference type="InterPro" id="IPR000795">
    <property type="entry name" value="T_Tr_GTP-bd_dom"/>
</dbReference>
<dbReference type="InterPro" id="IPR009000">
    <property type="entry name" value="Transl_B-barrel_sf"/>
</dbReference>
<dbReference type="InterPro" id="IPR004540">
    <property type="entry name" value="Transl_elong_EFG/EF2"/>
</dbReference>
<dbReference type="InterPro" id="IPR005517">
    <property type="entry name" value="Transl_elong_EFG/EF2_IV"/>
</dbReference>
<dbReference type="NCBIfam" id="TIGR00484">
    <property type="entry name" value="EF-G"/>
    <property type="match status" value="1"/>
</dbReference>
<dbReference type="NCBIfam" id="NF009381">
    <property type="entry name" value="PRK12740.1-5"/>
    <property type="match status" value="1"/>
</dbReference>
<dbReference type="NCBIfam" id="TIGR00231">
    <property type="entry name" value="small_GTP"/>
    <property type="match status" value="1"/>
</dbReference>
<dbReference type="PANTHER" id="PTHR43261:SF5">
    <property type="entry name" value="ELONGATION FACTOR G 1"/>
    <property type="match status" value="1"/>
</dbReference>
<dbReference type="PANTHER" id="PTHR43261">
    <property type="entry name" value="TRANSLATION ELONGATION FACTOR G-RELATED"/>
    <property type="match status" value="1"/>
</dbReference>
<dbReference type="Pfam" id="PF00679">
    <property type="entry name" value="EFG_C"/>
    <property type="match status" value="1"/>
</dbReference>
<dbReference type="Pfam" id="PF14492">
    <property type="entry name" value="EFG_III"/>
    <property type="match status" value="1"/>
</dbReference>
<dbReference type="Pfam" id="PF03764">
    <property type="entry name" value="EFG_IV"/>
    <property type="match status" value="1"/>
</dbReference>
<dbReference type="Pfam" id="PF00009">
    <property type="entry name" value="GTP_EFTU"/>
    <property type="match status" value="1"/>
</dbReference>
<dbReference type="Pfam" id="PF03144">
    <property type="entry name" value="GTP_EFTU_D2"/>
    <property type="match status" value="1"/>
</dbReference>
<dbReference type="PRINTS" id="PR00315">
    <property type="entry name" value="ELONGATNFCT"/>
</dbReference>
<dbReference type="SMART" id="SM00838">
    <property type="entry name" value="EFG_C"/>
    <property type="match status" value="1"/>
</dbReference>
<dbReference type="SMART" id="SM00889">
    <property type="entry name" value="EFG_IV"/>
    <property type="match status" value="1"/>
</dbReference>
<dbReference type="SUPFAM" id="SSF54980">
    <property type="entry name" value="EF-G C-terminal domain-like"/>
    <property type="match status" value="2"/>
</dbReference>
<dbReference type="SUPFAM" id="SSF52540">
    <property type="entry name" value="P-loop containing nucleoside triphosphate hydrolases"/>
    <property type="match status" value="1"/>
</dbReference>
<dbReference type="SUPFAM" id="SSF54211">
    <property type="entry name" value="Ribosomal protein S5 domain 2-like"/>
    <property type="match status" value="1"/>
</dbReference>
<dbReference type="SUPFAM" id="SSF50447">
    <property type="entry name" value="Translation proteins"/>
    <property type="match status" value="1"/>
</dbReference>
<dbReference type="PROSITE" id="PS00301">
    <property type="entry name" value="G_TR_1"/>
    <property type="match status" value="1"/>
</dbReference>
<dbReference type="PROSITE" id="PS51722">
    <property type="entry name" value="G_TR_2"/>
    <property type="match status" value="1"/>
</dbReference>
<comment type="function">
    <text evidence="1">Catalyzes the GTP-dependent ribosomal translocation step during translation elongation. During this step, the ribosome changes from the pre-translocational (PRE) to the post-translocational (POST) state as the newly formed A-site-bound peptidyl-tRNA and P-site-bound deacylated tRNA move to the P and E sites, respectively. Catalyzes the coordinated movement of the two tRNA molecules, the mRNA and conformational changes in the ribosome.</text>
</comment>
<comment type="subcellular location">
    <subcellularLocation>
        <location evidence="1">Cytoplasm</location>
    </subcellularLocation>
</comment>
<comment type="similarity">
    <text evidence="1">Belongs to the TRAFAC class translation factor GTPase superfamily. Classic translation factor GTPase family. EF-G/EF-2 subfamily.</text>
</comment>
<name>EFG1_COLP3</name>
<proteinExistence type="inferred from homology"/>
<feature type="chain" id="PRO_0000225204" description="Elongation factor G 1">
    <location>
        <begin position="1"/>
        <end position="701"/>
    </location>
</feature>
<feature type="domain" description="tr-type G">
    <location>
        <begin position="5"/>
        <end position="281"/>
    </location>
</feature>
<feature type="binding site" evidence="1">
    <location>
        <begin position="14"/>
        <end position="21"/>
    </location>
    <ligand>
        <name>GTP</name>
        <dbReference type="ChEBI" id="CHEBI:37565"/>
    </ligand>
</feature>
<feature type="binding site" evidence="1">
    <location>
        <begin position="78"/>
        <end position="82"/>
    </location>
    <ligand>
        <name>GTP</name>
        <dbReference type="ChEBI" id="CHEBI:37565"/>
    </ligand>
</feature>
<feature type="binding site" evidence="1">
    <location>
        <begin position="132"/>
        <end position="135"/>
    </location>
    <ligand>
        <name>GTP</name>
        <dbReference type="ChEBI" id="CHEBI:37565"/>
    </ligand>
</feature>
<protein>
    <recommendedName>
        <fullName evidence="1">Elongation factor G 1</fullName>
        <shortName evidence="1">EF-G 1</shortName>
    </recommendedName>
</protein>
<keyword id="KW-0963">Cytoplasm</keyword>
<keyword id="KW-0251">Elongation factor</keyword>
<keyword id="KW-0342">GTP-binding</keyword>
<keyword id="KW-0547">Nucleotide-binding</keyword>
<keyword id="KW-0648">Protein biosynthesis</keyword>
<sequence>MADLSKYRNIGIFAHVDAGKTTTTERILKLTGQIHKTGEVHDGESTTDFMEQEAERGITIQSAAVSCFWNDHRFNVIDTPGHVDFTVEVYRSLKVLDGGVGVFCGSGGVEPQSETNWRYANDSKVARIIMVNKLDRLGADFYRVCKQVKDVLGANPLIMTLPIGTEDEFVGVVDLLSEKAYIWDDTGLPENYEVTDIPADMVEQAAEYRVKLIETALEVDEDMLMEFLEGEMVPTIEQIKACIRTGTRDMTFFPTYGASAFKNKGIQLILDAVVDYLPSPTDVNPQPLTDEEGTPNGEFAIVSADETFKALAFKITDDRFGTLTFVRIYSGTLKKGDTILNAATGKTERVGRMCEMQADDRNELTSAQAGDIIAIVGMKSNVQTGHTLCDPKHPIVLEAMVFPKPVISISVTPKDKGSTEKMGLAIGKMVAEDPTFKVETDIDSGETILSGMGELHLDIKVDILKRTYGVELEVGKPQVAYRETITTAIEDSYTHKKQSGGSGQFGKIDYRIKPGEPGSGFVFSSVVVGGNVPKEFFPAIEKGFKGMMDTGVLAGFPVLDVEIELYDGGFHAVDSSAVAFELAARGAFRQSIPKAGAQLIEPIMKVDVFTPDDHVGDVIGDLNRRRGMIGGQEAGVSGVRIKADVPLSEMFGYIGTLRTMTSGRGQFSMEFSHYMPCPNNVAEIVIAEVKAAKIAKDAARK</sequence>
<accession>Q487Z1</accession>
<gene>
    <name evidence="1" type="primary">fusA1</name>
    <name type="ordered locus">CPS_0875</name>
</gene>
<evidence type="ECO:0000255" key="1">
    <source>
        <dbReference type="HAMAP-Rule" id="MF_00054"/>
    </source>
</evidence>
<organism>
    <name type="scientific">Colwellia psychrerythraea (strain 34H / ATCC BAA-681)</name>
    <name type="common">Vibrio psychroerythus</name>
    <dbReference type="NCBI Taxonomy" id="167879"/>
    <lineage>
        <taxon>Bacteria</taxon>
        <taxon>Pseudomonadati</taxon>
        <taxon>Pseudomonadota</taxon>
        <taxon>Gammaproteobacteria</taxon>
        <taxon>Alteromonadales</taxon>
        <taxon>Colwelliaceae</taxon>
        <taxon>Colwellia</taxon>
    </lineage>
</organism>